<name>RS7_HISS1</name>
<accession>Q0I536</accession>
<feature type="chain" id="PRO_1000014202" description="Small ribosomal subunit protein uS7">
    <location>
        <begin position="1"/>
        <end position="156"/>
    </location>
</feature>
<dbReference type="EMBL" id="CP000436">
    <property type="protein sequence ID" value="ABI25914.1"/>
    <property type="molecule type" value="Genomic_DNA"/>
</dbReference>
<dbReference type="SMR" id="Q0I536"/>
<dbReference type="KEGG" id="hso:HS_1646"/>
<dbReference type="eggNOG" id="COG0049">
    <property type="taxonomic scope" value="Bacteria"/>
</dbReference>
<dbReference type="HOGENOM" id="CLU_072226_1_1_6"/>
<dbReference type="GO" id="GO:0015935">
    <property type="term" value="C:small ribosomal subunit"/>
    <property type="evidence" value="ECO:0007669"/>
    <property type="project" value="InterPro"/>
</dbReference>
<dbReference type="GO" id="GO:0019843">
    <property type="term" value="F:rRNA binding"/>
    <property type="evidence" value="ECO:0007669"/>
    <property type="project" value="UniProtKB-UniRule"/>
</dbReference>
<dbReference type="GO" id="GO:0003735">
    <property type="term" value="F:structural constituent of ribosome"/>
    <property type="evidence" value="ECO:0007669"/>
    <property type="project" value="InterPro"/>
</dbReference>
<dbReference type="GO" id="GO:0000049">
    <property type="term" value="F:tRNA binding"/>
    <property type="evidence" value="ECO:0007669"/>
    <property type="project" value="UniProtKB-UniRule"/>
</dbReference>
<dbReference type="GO" id="GO:0006412">
    <property type="term" value="P:translation"/>
    <property type="evidence" value="ECO:0007669"/>
    <property type="project" value="UniProtKB-UniRule"/>
</dbReference>
<dbReference type="CDD" id="cd14869">
    <property type="entry name" value="uS7_Bacteria"/>
    <property type="match status" value="1"/>
</dbReference>
<dbReference type="FunFam" id="1.10.455.10:FF:000001">
    <property type="entry name" value="30S ribosomal protein S7"/>
    <property type="match status" value="1"/>
</dbReference>
<dbReference type="Gene3D" id="1.10.455.10">
    <property type="entry name" value="Ribosomal protein S7 domain"/>
    <property type="match status" value="1"/>
</dbReference>
<dbReference type="HAMAP" id="MF_00480_B">
    <property type="entry name" value="Ribosomal_uS7_B"/>
    <property type="match status" value="1"/>
</dbReference>
<dbReference type="InterPro" id="IPR000235">
    <property type="entry name" value="Ribosomal_uS7"/>
</dbReference>
<dbReference type="InterPro" id="IPR005717">
    <property type="entry name" value="Ribosomal_uS7_bac/org-type"/>
</dbReference>
<dbReference type="InterPro" id="IPR020606">
    <property type="entry name" value="Ribosomal_uS7_CS"/>
</dbReference>
<dbReference type="InterPro" id="IPR023798">
    <property type="entry name" value="Ribosomal_uS7_dom"/>
</dbReference>
<dbReference type="InterPro" id="IPR036823">
    <property type="entry name" value="Ribosomal_uS7_dom_sf"/>
</dbReference>
<dbReference type="NCBIfam" id="TIGR01029">
    <property type="entry name" value="rpsG_bact"/>
    <property type="match status" value="1"/>
</dbReference>
<dbReference type="PANTHER" id="PTHR11205">
    <property type="entry name" value="RIBOSOMAL PROTEIN S7"/>
    <property type="match status" value="1"/>
</dbReference>
<dbReference type="Pfam" id="PF00177">
    <property type="entry name" value="Ribosomal_S7"/>
    <property type="match status" value="1"/>
</dbReference>
<dbReference type="PIRSF" id="PIRSF002122">
    <property type="entry name" value="RPS7p_RPS7a_RPS5e_RPS7o"/>
    <property type="match status" value="1"/>
</dbReference>
<dbReference type="SUPFAM" id="SSF47973">
    <property type="entry name" value="Ribosomal protein S7"/>
    <property type="match status" value="1"/>
</dbReference>
<dbReference type="PROSITE" id="PS00052">
    <property type="entry name" value="RIBOSOMAL_S7"/>
    <property type="match status" value="1"/>
</dbReference>
<reference key="1">
    <citation type="journal article" date="2007" name="J. Bacteriol.">
        <title>Complete genome sequence of Haemophilus somnus (Histophilus somni) strain 129Pt and comparison to Haemophilus ducreyi 35000HP and Haemophilus influenzae Rd.</title>
        <authorList>
            <person name="Challacombe J.F."/>
            <person name="Duncan A.J."/>
            <person name="Brettin T.S."/>
            <person name="Bruce D."/>
            <person name="Chertkov O."/>
            <person name="Detter J.C."/>
            <person name="Han C.S."/>
            <person name="Misra M."/>
            <person name="Richardson P."/>
            <person name="Tapia R."/>
            <person name="Thayer N."/>
            <person name="Xie G."/>
            <person name="Inzana T.J."/>
        </authorList>
    </citation>
    <scope>NUCLEOTIDE SEQUENCE [LARGE SCALE GENOMIC DNA]</scope>
    <source>
        <strain>129Pt</strain>
    </source>
</reference>
<keyword id="KW-0687">Ribonucleoprotein</keyword>
<keyword id="KW-0689">Ribosomal protein</keyword>
<keyword id="KW-0694">RNA-binding</keyword>
<keyword id="KW-0699">rRNA-binding</keyword>
<keyword id="KW-0820">tRNA-binding</keyword>
<gene>
    <name evidence="1" type="primary">rpsG</name>
    <name type="ordered locus">HS_1646</name>
</gene>
<evidence type="ECO:0000255" key="1">
    <source>
        <dbReference type="HAMAP-Rule" id="MF_00480"/>
    </source>
</evidence>
<evidence type="ECO:0000305" key="2"/>
<protein>
    <recommendedName>
        <fullName evidence="1">Small ribosomal subunit protein uS7</fullName>
    </recommendedName>
    <alternativeName>
        <fullName evidence="2">30S ribosomal protein S7</fullName>
    </alternativeName>
</protein>
<comment type="function">
    <text evidence="1">One of the primary rRNA binding proteins, it binds directly to 16S rRNA where it nucleates assembly of the head domain of the 30S subunit. Is located at the subunit interface close to the decoding center, probably blocks exit of the E-site tRNA.</text>
</comment>
<comment type="subunit">
    <text evidence="1">Part of the 30S ribosomal subunit. Contacts proteins S9 and S11.</text>
</comment>
<comment type="similarity">
    <text evidence="1">Belongs to the universal ribosomal protein uS7 family.</text>
</comment>
<sequence length="156" mass="17686">MPRRRRIEPRKILPDPKFGSELLAKFINVLMVDGKKSIAESIVYGALETLSQRTGKEALEAFEIALENVRPTVEVKSRRVGGSTYQVPVEVRPTRRNALGMRWIVEAARKRGDKSMALRLANELSDASENKGAAVKKREDVHRMAEANKAFAHYRW</sequence>
<organism>
    <name type="scientific">Histophilus somni (strain 129Pt)</name>
    <name type="common">Haemophilus somnus</name>
    <dbReference type="NCBI Taxonomy" id="205914"/>
    <lineage>
        <taxon>Bacteria</taxon>
        <taxon>Pseudomonadati</taxon>
        <taxon>Pseudomonadota</taxon>
        <taxon>Gammaproteobacteria</taxon>
        <taxon>Pasteurellales</taxon>
        <taxon>Pasteurellaceae</taxon>
        <taxon>Histophilus</taxon>
    </lineage>
</organism>
<proteinExistence type="inferred from homology"/>